<comment type="function">
    <text evidence="1">Component of the dark-operative protochlorophyllide reductase (DPOR) that uses Mg-ATP and reduced ferredoxin to reduce ring D of protochlorophyllide (Pchlide) to form chlorophyllide a (Chlide). This reaction is light-independent. The NB-protein (BchN-BchB) is the catalytic component of the complex.</text>
</comment>
<comment type="catalytic activity">
    <reaction evidence="1">
        <text>chlorophyllide a + oxidized 2[4Fe-4S]-[ferredoxin] + 2 ADP + 2 phosphate = protochlorophyllide a + reduced 2[4Fe-4S]-[ferredoxin] + 2 ATP + 2 H2O</text>
        <dbReference type="Rhea" id="RHEA:28202"/>
        <dbReference type="Rhea" id="RHEA-COMP:10002"/>
        <dbReference type="Rhea" id="RHEA-COMP:10004"/>
        <dbReference type="ChEBI" id="CHEBI:15377"/>
        <dbReference type="ChEBI" id="CHEBI:30616"/>
        <dbReference type="ChEBI" id="CHEBI:33722"/>
        <dbReference type="ChEBI" id="CHEBI:33723"/>
        <dbReference type="ChEBI" id="CHEBI:43474"/>
        <dbReference type="ChEBI" id="CHEBI:83348"/>
        <dbReference type="ChEBI" id="CHEBI:83350"/>
        <dbReference type="ChEBI" id="CHEBI:456216"/>
        <dbReference type="EC" id="1.3.7.7"/>
    </reaction>
</comment>
<comment type="cofactor">
    <cofactor evidence="1">
        <name>[4Fe-4S] cluster</name>
        <dbReference type="ChEBI" id="CHEBI:49883"/>
    </cofactor>
    <text evidence="1">Binds 1 [4Fe-4S] cluster per heterodimer. The cluster is bound at the heterodimer interface by residues from both subunits.</text>
</comment>
<comment type="pathway">
    <text evidence="1">Porphyrin-containing compound metabolism; bacteriochlorophyll biosynthesis (light-independent).</text>
</comment>
<comment type="subunit">
    <text evidence="1">Protochlorophyllide reductase is composed of three subunits; BchL, BchN and BchB. Forms a heterotetramer of two BchB and two BchN subunits.</text>
</comment>
<comment type="similarity">
    <text evidence="1">Belongs to the ChlB/BchB/BchZ family.</text>
</comment>
<organism>
    <name type="scientific">Chlorobaculum parvum (strain DSM 263 / NCIMB 8327)</name>
    <name type="common">Chlorobium vibrioforme subsp. thiosulfatophilum</name>
    <dbReference type="NCBI Taxonomy" id="517417"/>
    <lineage>
        <taxon>Bacteria</taxon>
        <taxon>Pseudomonadati</taxon>
        <taxon>Chlorobiota</taxon>
        <taxon>Chlorobiia</taxon>
        <taxon>Chlorobiales</taxon>
        <taxon>Chlorobiaceae</taxon>
        <taxon>Chlorobaculum</taxon>
    </lineage>
</organism>
<sequence>MRLAFWLYEGTALHGVSRVTNSMKGVHTVYHAPQGDDYITATYTMLERTPEFPKLSISVVRGQDLARGTSRLPGTVEQVAKHYNPELIVVAPSCSTALLQEDLGQMARASGIDENKIMVYAVNPFRVAETEAAEGLFTELVKRFAAEQPKTEKPSVNLLGFTSLGFHLRSNLTSLRRMLKTLGIEVNVVAPWGAGIDDLKKLPAAWVNIAPFRELGCQAAGYLKENFGMPSITEAPLGVNATLRWLRAIIAEVNKIGAEKGMAPIEMPEMRDFSLDGQSAPSGVPWFARTADMESFSNKRAFVFGDATQVVGVTKFLKDELGMKIIGAGTYLPKQADWVREQLEGYLPGELMVTDKFQEVSAFIEEEMPELVCGTQMERHSCRKLDVPCMVISTPTHIENHLLGYYPFFGFDGADVMADRVYTSAKLGLEKHLIDFFGDAGLEYEEEEPEVFTEPAMSGNGTVTSSAEAPAEAAVATATATGELSWTAEAEKMLGKVPFFVRKKVRKNTDNYAREIGEQVITADVFRKAKEHLGG</sequence>
<reference key="1">
    <citation type="submission" date="2008-06" db="EMBL/GenBank/DDBJ databases">
        <title>Complete sequence of Chlorobaculum parvum NCIB 8327.</title>
        <authorList>
            <consortium name="US DOE Joint Genome Institute"/>
            <person name="Lucas S."/>
            <person name="Copeland A."/>
            <person name="Lapidus A."/>
            <person name="Glavina del Rio T."/>
            <person name="Dalin E."/>
            <person name="Tice H."/>
            <person name="Bruce D."/>
            <person name="Goodwin L."/>
            <person name="Pitluck S."/>
            <person name="Schmutz J."/>
            <person name="Larimer F."/>
            <person name="Land M."/>
            <person name="Hauser L."/>
            <person name="Kyrpides N."/>
            <person name="Mikhailova N."/>
            <person name="Zhao F."/>
            <person name="Li T."/>
            <person name="Liu Z."/>
            <person name="Overmann J."/>
            <person name="Bryant D.A."/>
            <person name="Richardson P."/>
        </authorList>
    </citation>
    <scope>NUCLEOTIDE SEQUENCE [LARGE SCALE GENOMIC DNA]</scope>
    <source>
        <strain>DSM 263 / NCIMB 8327</strain>
    </source>
</reference>
<protein>
    <recommendedName>
        <fullName evidence="1">Light-independent protochlorophyllide reductase subunit B</fullName>
        <shortName evidence="1">DPOR subunit B</shortName>
        <shortName evidence="1">LI-POR subunit B</shortName>
        <ecNumber evidence="1">1.3.7.7</ecNumber>
    </recommendedName>
</protein>
<dbReference type="EC" id="1.3.7.7" evidence="1"/>
<dbReference type="EMBL" id="CP001099">
    <property type="protein sequence ID" value="ACF10647.1"/>
    <property type="molecule type" value="Genomic_DNA"/>
</dbReference>
<dbReference type="RefSeq" id="WP_012501481.1">
    <property type="nucleotide sequence ID" value="NC_011027.1"/>
</dbReference>
<dbReference type="SMR" id="B3QQZ3"/>
<dbReference type="STRING" id="517417.Cpar_0220"/>
<dbReference type="KEGG" id="cpc:Cpar_0220"/>
<dbReference type="eggNOG" id="COG2710">
    <property type="taxonomic scope" value="Bacteria"/>
</dbReference>
<dbReference type="HOGENOM" id="CLU_025470_0_0_10"/>
<dbReference type="OrthoDB" id="5717231at2"/>
<dbReference type="UniPathway" id="UPA00671"/>
<dbReference type="Proteomes" id="UP000008811">
    <property type="component" value="Chromosome"/>
</dbReference>
<dbReference type="GO" id="GO:0051539">
    <property type="term" value="F:4 iron, 4 sulfur cluster binding"/>
    <property type="evidence" value="ECO:0007669"/>
    <property type="project" value="UniProtKB-UniRule"/>
</dbReference>
<dbReference type="GO" id="GO:0005524">
    <property type="term" value="F:ATP binding"/>
    <property type="evidence" value="ECO:0007669"/>
    <property type="project" value="UniProtKB-UniRule"/>
</dbReference>
<dbReference type="GO" id="GO:0046872">
    <property type="term" value="F:metal ion binding"/>
    <property type="evidence" value="ECO:0007669"/>
    <property type="project" value="UniProtKB-KW"/>
</dbReference>
<dbReference type="GO" id="GO:0016730">
    <property type="term" value="F:oxidoreductase activity, acting on iron-sulfur proteins as donors"/>
    <property type="evidence" value="ECO:0007669"/>
    <property type="project" value="InterPro"/>
</dbReference>
<dbReference type="GO" id="GO:0016636">
    <property type="term" value="F:oxidoreductase activity, acting on the CH-CH group of donors, iron-sulfur protein as acceptor"/>
    <property type="evidence" value="ECO:0007669"/>
    <property type="project" value="UniProtKB-UniRule"/>
</dbReference>
<dbReference type="GO" id="GO:0036070">
    <property type="term" value="P:light-independent bacteriochlorophyll biosynthetic process"/>
    <property type="evidence" value="ECO:0007669"/>
    <property type="project" value="UniProtKB-UniRule"/>
</dbReference>
<dbReference type="GO" id="GO:0019685">
    <property type="term" value="P:photosynthesis, dark reaction"/>
    <property type="evidence" value="ECO:0007669"/>
    <property type="project" value="InterPro"/>
</dbReference>
<dbReference type="CDD" id="cd01981">
    <property type="entry name" value="Pchlide_reductase_B"/>
    <property type="match status" value="1"/>
</dbReference>
<dbReference type="Gene3D" id="1.20.89.20">
    <property type="match status" value="1"/>
</dbReference>
<dbReference type="Gene3D" id="3.40.50.1980">
    <property type="entry name" value="Nitrogenase molybdenum iron protein domain"/>
    <property type="match status" value="3"/>
</dbReference>
<dbReference type="Gene3D" id="1.10.8.550">
    <property type="entry name" value="Proto-chlorophyllide reductase 57 kD subunit B"/>
    <property type="match status" value="1"/>
</dbReference>
<dbReference type="HAMAP" id="MF_00353">
    <property type="entry name" value="ChlB_BchB"/>
    <property type="match status" value="1"/>
</dbReference>
<dbReference type="InterPro" id="IPR050152">
    <property type="entry name" value="ChlB/BchB/BchZ"/>
</dbReference>
<dbReference type="InterPro" id="IPR013580">
    <property type="entry name" value="LI-POR_suB-like_C"/>
</dbReference>
<dbReference type="InterPro" id="IPR000510">
    <property type="entry name" value="Nase/OxRdtase_comp1"/>
</dbReference>
<dbReference type="InterPro" id="IPR042298">
    <property type="entry name" value="P-CP_red_C"/>
</dbReference>
<dbReference type="InterPro" id="IPR005969">
    <property type="entry name" value="Protochl_reductB"/>
</dbReference>
<dbReference type="InterPro" id="IPR016209">
    <property type="entry name" value="Protochlorophyllide_Rdtase"/>
</dbReference>
<dbReference type="NCBIfam" id="TIGR01278">
    <property type="entry name" value="DPOR_BchB"/>
    <property type="match status" value="1"/>
</dbReference>
<dbReference type="NCBIfam" id="NF002789">
    <property type="entry name" value="PRK02910.1-3"/>
    <property type="match status" value="1"/>
</dbReference>
<dbReference type="PANTHER" id="PTHR33712">
    <property type="entry name" value="LIGHT-INDEPENDENT PROTOCHLOROPHYLLIDE REDUCTASE SUBUNIT B"/>
    <property type="match status" value="1"/>
</dbReference>
<dbReference type="PANTHER" id="PTHR33712:SF7">
    <property type="entry name" value="LIGHT-INDEPENDENT PROTOCHLOROPHYLLIDE REDUCTASE SUBUNIT B"/>
    <property type="match status" value="1"/>
</dbReference>
<dbReference type="Pfam" id="PF00148">
    <property type="entry name" value="Oxidored_nitro"/>
    <property type="match status" value="1"/>
</dbReference>
<dbReference type="Pfam" id="PF08369">
    <property type="entry name" value="PCP_red"/>
    <property type="match status" value="1"/>
</dbReference>
<dbReference type="PIRSF" id="PIRSF000163">
    <property type="entry name" value="PCP_ChlB"/>
    <property type="match status" value="1"/>
</dbReference>
<dbReference type="SUPFAM" id="SSF53807">
    <property type="entry name" value="Helical backbone' metal receptor"/>
    <property type="match status" value="1"/>
</dbReference>
<name>BCHB_CHLP8</name>
<keyword id="KW-0004">4Fe-4S</keyword>
<keyword id="KW-0067">ATP-binding</keyword>
<keyword id="KW-0077">Bacteriochlorophyll biosynthesis</keyword>
<keyword id="KW-0149">Chlorophyll biosynthesis</keyword>
<keyword id="KW-0408">Iron</keyword>
<keyword id="KW-0411">Iron-sulfur</keyword>
<keyword id="KW-0479">Metal-binding</keyword>
<keyword id="KW-0547">Nucleotide-binding</keyword>
<keyword id="KW-0560">Oxidoreductase</keyword>
<keyword id="KW-0602">Photosynthesis</keyword>
<feature type="chain" id="PRO_1000120524" description="Light-independent protochlorophyllide reductase subunit B">
    <location>
        <begin position="1"/>
        <end position="535"/>
    </location>
</feature>
<feature type="active site" description="Proton donor" evidence="1">
    <location>
        <position position="292"/>
    </location>
</feature>
<feature type="binding site" evidence="1">
    <location>
        <position position="36"/>
    </location>
    <ligand>
        <name>[4Fe-4S] cluster</name>
        <dbReference type="ChEBI" id="CHEBI:49883"/>
        <note>ligand shared with heterodimeric partner</note>
    </ligand>
</feature>
<feature type="binding site" evidence="1">
    <location>
        <begin position="428"/>
        <end position="429"/>
    </location>
    <ligand>
        <name>substrate</name>
    </ligand>
</feature>
<proteinExistence type="inferred from homology"/>
<gene>
    <name evidence="1" type="primary">bchB</name>
    <name type="ordered locus">Cpar_0220</name>
</gene>
<evidence type="ECO:0000255" key="1">
    <source>
        <dbReference type="HAMAP-Rule" id="MF_00353"/>
    </source>
</evidence>
<accession>B3QQZ3</accession>